<dbReference type="EMBL" id="CR383672">
    <property type="status" value="NOT_ANNOTATED_CDS"/>
    <property type="molecule type" value="Genomic_DNA"/>
</dbReference>
<dbReference type="EMBL" id="BC146746">
    <property type="protein sequence ID" value="AAI46747.1"/>
    <property type="molecule type" value="mRNA"/>
</dbReference>
<dbReference type="RefSeq" id="NP_001093622.1">
    <property type="nucleotide sequence ID" value="NM_001100152.1"/>
</dbReference>
<dbReference type="FunCoup" id="F1QGH6">
    <property type="interactions" value="1051"/>
</dbReference>
<dbReference type="STRING" id="7955.ENSDARP00000102405"/>
<dbReference type="PaxDb" id="7955-ENSDARP00000102405"/>
<dbReference type="Ensembl" id="ENSDART00000115165">
    <property type="protein sequence ID" value="ENSDARP00000102405"/>
    <property type="gene ID" value="ENSDARG00000075222"/>
</dbReference>
<dbReference type="GeneID" id="100101649"/>
<dbReference type="KEGG" id="dre:100101649"/>
<dbReference type="AGR" id="ZFIN:ZDB-GENE-070719-5"/>
<dbReference type="CTD" id="219287"/>
<dbReference type="ZFIN" id="ZDB-GENE-070719-5">
    <property type="gene designation" value="amer2"/>
</dbReference>
<dbReference type="eggNOG" id="ENOG502QU08">
    <property type="taxonomic scope" value="Eukaryota"/>
</dbReference>
<dbReference type="HOGENOM" id="CLU_032195_0_0_1"/>
<dbReference type="InParanoid" id="F1QGH6"/>
<dbReference type="OMA" id="RICLMFA"/>
<dbReference type="OrthoDB" id="9943219at2759"/>
<dbReference type="TreeFam" id="TF333006"/>
<dbReference type="PRO" id="PR:F1QGH6"/>
<dbReference type="Proteomes" id="UP000000437">
    <property type="component" value="Chromosome 24"/>
</dbReference>
<dbReference type="Bgee" id="ENSDARG00000075222">
    <property type="expression patterns" value="Expressed in retina and 9 other cell types or tissues"/>
</dbReference>
<dbReference type="GO" id="GO:0005886">
    <property type="term" value="C:plasma membrane"/>
    <property type="evidence" value="ECO:0000250"/>
    <property type="project" value="UniProtKB"/>
</dbReference>
<dbReference type="GO" id="GO:0008013">
    <property type="term" value="F:beta-catenin binding"/>
    <property type="evidence" value="ECO:0000318"/>
    <property type="project" value="GO_Central"/>
</dbReference>
<dbReference type="GO" id="GO:0005546">
    <property type="term" value="F:phosphatidylinositol-4,5-bisphosphate binding"/>
    <property type="evidence" value="ECO:0000250"/>
    <property type="project" value="UniProtKB"/>
</dbReference>
<dbReference type="GO" id="GO:0007398">
    <property type="term" value="P:ectoderm development"/>
    <property type="evidence" value="ECO:0000250"/>
    <property type="project" value="UniProtKB"/>
</dbReference>
<dbReference type="GO" id="GO:0090090">
    <property type="term" value="P:negative regulation of canonical Wnt signaling pathway"/>
    <property type="evidence" value="ECO:0000250"/>
    <property type="project" value="UniProtKB"/>
</dbReference>
<dbReference type="GO" id="GO:0060828">
    <property type="term" value="P:regulation of canonical Wnt signaling pathway"/>
    <property type="evidence" value="ECO:0000318"/>
    <property type="project" value="GO_Central"/>
</dbReference>
<dbReference type="GO" id="GO:0016055">
    <property type="term" value="P:Wnt signaling pathway"/>
    <property type="evidence" value="ECO:0007669"/>
    <property type="project" value="UniProtKB-KW"/>
</dbReference>
<dbReference type="InterPro" id="IPR019003">
    <property type="entry name" value="AMER"/>
</dbReference>
<dbReference type="PANTHER" id="PTHR22237:SF1">
    <property type="entry name" value="APC MEMBRANE RECRUITMENT PROTEIN 2"/>
    <property type="match status" value="1"/>
</dbReference>
<dbReference type="PANTHER" id="PTHR22237">
    <property type="entry name" value="APC MEMBRANE RECRUITMENT PROTEIN 2-RELATED"/>
    <property type="match status" value="1"/>
</dbReference>
<dbReference type="Pfam" id="PF09422">
    <property type="entry name" value="AMER"/>
    <property type="match status" value="1"/>
</dbReference>
<accession>F1QGH6</accession>
<accession>A6H8T6</accession>
<gene>
    <name type="primary">amer2</name>
    <name type="synonym">fam123a</name>
    <name type="ORF">zgc:165647</name>
</gene>
<sequence>MEVQTECSEPPPCDPQPPGKLNKAAFKLFGKRKSGSSMPSIFSVRNKGESTGKAAGKTLELVRSKTHDGLITDTPSELDSHRKEESASSDQLHAGTPDGVSTAPLRSSITKSFSFFSLLRRSSSRAGDGTTTVGRRGRGLKGLFSSMRWRRKPQIQEDTLEVAKEVKEGDLILSSSSGSVKTEKDMTLTLEPLPQVFEESPLPGDSDKWKVASMQGIQGTNEVECGNCGPSVSQQHTVTEESPAPSPLRVQTGGLQNHKHSSSTHLSSIPTCALTPPMEHSTADPQSEQSVDRLCSMFTDVTSLKSFDSLTGCGDIIADPEEDSGNGGSATSSGTGSSSGGCMGRRLSGAGTNSERCSPAKPPLPPQVSSLASIHASCYMPAHQRPRAAPKKPQGSGVVAYMGGGEEMASPEGVDDADMQGLWHMLPQKDEDSPAPRRAEPVLHHAPARLEKRPPQVKALGLSKIPVSGSSKTGKQQPSRPSPPPVDKELQDAPPSDEGYWDSPTPGPEDEDSTFLRRDGLLRDSCSGDALYDLYDPDSPSAAGSDDDASSPTKSAGDLKMNLPSPKCSSSATSSFRSMKGSTSLPRDSKIPISVRQTPPSHSSSQGALSSNLSPTSTTPPKKTDAPPRTKIPVSKVPVRRSGGKSTSTSQSRK</sequence>
<reference key="1">
    <citation type="journal article" date="2013" name="Nature">
        <title>The zebrafish reference genome sequence and its relationship to the human genome.</title>
        <authorList>
            <person name="Howe K."/>
            <person name="Clark M.D."/>
            <person name="Torroja C.F."/>
            <person name="Torrance J."/>
            <person name="Berthelot C."/>
            <person name="Muffato M."/>
            <person name="Collins J.E."/>
            <person name="Humphray S."/>
            <person name="McLaren K."/>
            <person name="Matthews L."/>
            <person name="McLaren S."/>
            <person name="Sealy I."/>
            <person name="Caccamo M."/>
            <person name="Churcher C."/>
            <person name="Scott C."/>
            <person name="Barrett J.C."/>
            <person name="Koch R."/>
            <person name="Rauch G.J."/>
            <person name="White S."/>
            <person name="Chow W."/>
            <person name="Kilian B."/>
            <person name="Quintais L.T."/>
            <person name="Guerra-Assuncao J.A."/>
            <person name="Zhou Y."/>
            <person name="Gu Y."/>
            <person name="Yen J."/>
            <person name="Vogel J.H."/>
            <person name="Eyre T."/>
            <person name="Redmond S."/>
            <person name="Banerjee R."/>
            <person name="Chi J."/>
            <person name="Fu B."/>
            <person name="Langley E."/>
            <person name="Maguire S.F."/>
            <person name="Laird G.K."/>
            <person name="Lloyd D."/>
            <person name="Kenyon E."/>
            <person name="Donaldson S."/>
            <person name="Sehra H."/>
            <person name="Almeida-King J."/>
            <person name="Loveland J."/>
            <person name="Trevanion S."/>
            <person name="Jones M."/>
            <person name="Quail M."/>
            <person name="Willey D."/>
            <person name="Hunt A."/>
            <person name="Burton J."/>
            <person name="Sims S."/>
            <person name="McLay K."/>
            <person name="Plumb B."/>
            <person name="Davis J."/>
            <person name="Clee C."/>
            <person name="Oliver K."/>
            <person name="Clark R."/>
            <person name="Riddle C."/>
            <person name="Elliot D."/>
            <person name="Threadgold G."/>
            <person name="Harden G."/>
            <person name="Ware D."/>
            <person name="Begum S."/>
            <person name="Mortimore B."/>
            <person name="Kerry G."/>
            <person name="Heath P."/>
            <person name="Phillimore B."/>
            <person name="Tracey A."/>
            <person name="Corby N."/>
            <person name="Dunn M."/>
            <person name="Johnson C."/>
            <person name="Wood J."/>
            <person name="Clark S."/>
            <person name="Pelan S."/>
            <person name="Griffiths G."/>
            <person name="Smith M."/>
            <person name="Glithero R."/>
            <person name="Howden P."/>
            <person name="Barker N."/>
            <person name="Lloyd C."/>
            <person name="Stevens C."/>
            <person name="Harley J."/>
            <person name="Holt K."/>
            <person name="Panagiotidis G."/>
            <person name="Lovell J."/>
            <person name="Beasley H."/>
            <person name="Henderson C."/>
            <person name="Gordon D."/>
            <person name="Auger K."/>
            <person name="Wright D."/>
            <person name="Collins J."/>
            <person name="Raisen C."/>
            <person name="Dyer L."/>
            <person name="Leung K."/>
            <person name="Robertson L."/>
            <person name="Ambridge K."/>
            <person name="Leongamornlert D."/>
            <person name="McGuire S."/>
            <person name="Gilderthorp R."/>
            <person name="Griffiths C."/>
            <person name="Manthravadi D."/>
            <person name="Nichol S."/>
            <person name="Barker G."/>
            <person name="Whitehead S."/>
            <person name="Kay M."/>
            <person name="Brown J."/>
            <person name="Murnane C."/>
            <person name="Gray E."/>
            <person name="Humphries M."/>
            <person name="Sycamore N."/>
            <person name="Barker D."/>
            <person name="Saunders D."/>
            <person name="Wallis J."/>
            <person name="Babbage A."/>
            <person name="Hammond S."/>
            <person name="Mashreghi-Mohammadi M."/>
            <person name="Barr L."/>
            <person name="Martin S."/>
            <person name="Wray P."/>
            <person name="Ellington A."/>
            <person name="Matthews N."/>
            <person name="Ellwood M."/>
            <person name="Woodmansey R."/>
            <person name="Clark G."/>
            <person name="Cooper J."/>
            <person name="Tromans A."/>
            <person name="Grafham D."/>
            <person name="Skuce C."/>
            <person name="Pandian R."/>
            <person name="Andrews R."/>
            <person name="Harrison E."/>
            <person name="Kimberley A."/>
            <person name="Garnett J."/>
            <person name="Fosker N."/>
            <person name="Hall R."/>
            <person name="Garner P."/>
            <person name="Kelly D."/>
            <person name="Bird C."/>
            <person name="Palmer S."/>
            <person name="Gehring I."/>
            <person name="Berger A."/>
            <person name="Dooley C.M."/>
            <person name="Ersan-Urun Z."/>
            <person name="Eser C."/>
            <person name="Geiger H."/>
            <person name="Geisler M."/>
            <person name="Karotki L."/>
            <person name="Kirn A."/>
            <person name="Konantz J."/>
            <person name="Konantz M."/>
            <person name="Oberlander M."/>
            <person name="Rudolph-Geiger S."/>
            <person name="Teucke M."/>
            <person name="Lanz C."/>
            <person name="Raddatz G."/>
            <person name="Osoegawa K."/>
            <person name="Zhu B."/>
            <person name="Rapp A."/>
            <person name="Widaa S."/>
            <person name="Langford C."/>
            <person name="Yang F."/>
            <person name="Schuster S.C."/>
            <person name="Carter N.P."/>
            <person name="Harrow J."/>
            <person name="Ning Z."/>
            <person name="Herrero J."/>
            <person name="Searle S.M."/>
            <person name="Enright A."/>
            <person name="Geisler R."/>
            <person name="Plasterk R.H."/>
            <person name="Lee C."/>
            <person name="Westerfield M."/>
            <person name="de Jong P.J."/>
            <person name="Zon L.I."/>
            <person name="Postlethwait J.H."/>
            <person name="Nusslein-Volhard C."/>
            <person name="Hubbard T.J."/>
            <person name="Roest Crollius H."/>
            <person name="Rogers J."/>
            <person name="Stemple D.L."/>
        </authorList>
    </citation>
    <scope>NUCLEOTIDE SEQUENCE [LARGE SCALE GENOMIC DNA]</scope>
    <source>
        <strain>Tuebingen</strain>
    </source>
</reference>
<reference key="2">
    <citation type="submission" date="2007-06" db="EMBL/GenBank/DDBJ databases">
        <authorList>
            <consortium name="NIH - Zebrafish Gene Collection (ZGC) project"/>
        </authorList>
    </citation>
    <scope>NUCLEOTIDE SEQUENCE [LARGE SCALE MRNA]</scope>
    <source>
        <tissue>Olfactory epithelium</tissue>
    </source>
</reference>
<evidence type="ECO:0000250" key="1"/>
<evidence type="ECO:0000256" key="2">
    <source>
        <dbReference type="SAM" id="MobiDB-lite"/>
    </source>
</evidence>
<evidence type="ECO:0000305" key="3"/>
<name>AMER2_DANRE</name>
<comment type="function">
    <text evidence="1">Negative regulator of the canonical Wnt signaling pathway involved in neuroectodermal patterning. Acts by specifically binding phosphatidylinositol 4,5-bisphosphate (PtdIns(4,5)P2), translocating to the cell membrane and interacting with key regulators of the canonical Wnt signaling pathway, such as components of the beta-catenin destruction complex (By similarity).</text>
</comment>
<comment type="subcellular location">
    <subcellularLocation>
        <location evidence="1">Cell membrane</location>
        <topology evidence="1">Peripheral membrane protein</topology>
    </subcellularLocation>
    <text evidence="1">Translocates to the cell membrane following binding to PtdIns(4,5)P2.</text>
</comment>
<comment type="similarity">
    <text evidence="3">Belongs to the Amer family.</text>
</comment>
<organism>
    <name type="scientific">Danio rerio</name>
    <name type="common">Zebrafish</name>
    <name type="synonym">Brachydanio rerio</name>
    <dbReference type="NCBI Taxonomy" id="7955"/>
    <lineage>
        <taxon>Eukaryota</taxon>
        <taxon>Metazoa</taxon>
        <taxon>Chordata</taxon>
        <taxon>Craniata</taxon>
        <taxon>Vertebrata</taxon>
        <taxon>Euteleostomi</taxon>
        <taxon>Actinopterygii</taxon>
        <taxon>Neopterygii</taxon>
        <taxon>Teleostei</taxon>
        <taxon>Ostariophysi</taxon>
        <taxon>Cypriniformes</taxon>
        <taxon>Danionidae</taxon>
        <taxon>Danioninae</taxon>
        <taxon>Danio</taxon>
    </lineage>
</organism>
<protein>
    <recommendedName>
        <fullName>APC membrane recruitment protein 2</fullName>
        <shortName>Amer2</shortName>
    </recommendedName>
    <alternativeName>
        <fullName>Protein FAM123A</fullName>
    </alternativeName>
</protein>
<feature type="chain" id="PRO_0000416261" description="APC membrane recruitment protein 2">
    <location>
        <begin position="1"/>
        <end position="654"/>
    </location>
</feature>
<feature type="region of interest" description="Disordered" evidence="2">
    <location>
        <begin position="1"/>
        <end position="105"/>
    </location>
</feature>
<feature type="region of interest" description="Disordered" evidence="2">
    <location>
        <begin position="224"/>
        <end position="289"/>
    </location>
</feature>
<feature type="region of interest" description="Disordered" evidence="2">
    <location>
        <begin position="316"/>
        <end position="369"/>
    </location>
</feature>
<feature type="region of interest" description="Disordered" evidence="2">
    <location>
        <begin position="381"/>
        <end position="654"/>
    </location>
</feature>
<feature type="compositionally biased region" description="Pro residues" evidence="2">
    <location>
        <begin position="9"/>
        <end position="18"/>
    </location>
</feature>
<feature type="compositionally biased region" description="Basic and acidic residues" evidence="2">
    <location>
        <begin position="60"/>
        <end position="70"/>
    </location>
</feature>
<feature type="compositionally biased region" description="Basic and acidic residues" evidence="2">
    <location>
        <begin position="427"/>
        <end position="454"/>
    </location>
</feature>
<feature type="compositionally biased region" description="Polar residues" evidence="2">
    <location>
        <begin position="468"/>
        <end position="479"/>
    </location>
</feature>
<feature type="compositionally biased region" description="Low complexity" evidence="2">
    <location>
        <begin position="565"/>
        <end position="575"/>
    </location>
</feature>
<feature type="compositionally biased region" description="Polar residues" evidence="2">
    <location>
        <begin position="576"/>
        <end position="586"/>
    </location>
</feature>
<feature type="compositionally biased region" description="Low complexity" evidence="2">
    <location>
        <begin position="601"/>
        <end position="621"/>
    </location>
</feature>
<feature type="compositionally biased region" description="Polar residues" evidence="2">
    <location>
        <begin position="644"/>
        <end position="654"/>
    </location>
</feature>
<feature type="sequence conflict" description="In Ref. 2; AAI46747." evidence="3" ref="2">
    <original>E</original>
    <variation>G</variation>
    <location>
        <position position="85"/>
    </location>
</feature>
<feature type="sequence conflict" description="In Ref. 2; AAI46747." evidence="3" ref="2">
    <original>G</original>
    <variation>E</variation>
    <location>
        <position position="216"/>
    </location>
</feature>
<feature type="sequence conflict" description="In Ref. 2; AAI46747." evidence="3" ref="2">
    <original>L</original>
    <variation>F</variation>
    <location>
        <position position="255"/>
    </location>
</feature>
<feature type="sequence conflict" description="In Ref. 2; AAI46747." evidence="3" ref="2">
    <original>S</original>
    <variation>N</variation>
    <location>
        <position position="582"/>
    </location>
</feature>
<proteinExistence type="evidence at transcript level"/>
<keyword id="KW-1003">Cell membrane</keyword>
<keyword id="KW-0446">Lipid-binding</keyword>
<keyword id="KW-0472">Membrane</keyword>
<keyword id="KW-1185">Reference proteome</keyword>
<keyword id="KW-0879">Wnt signaling pathway</keyword>